<comment type="function">
    <text evidence="1">Catalyzes the transformation of pimelate into pimeloyl-CoA with concomitant hydrolysis of ATP to AMP.</text>
</comment>
<comment type="catalytic activity">
    <reaction evidence="1">
        <text>heptanedioate + ATP + CoA = 6-carboxyhexanoyl-CoA + AMP + diphosphate</text>
        <dbReference type="Rhea" id="RHEA:14781"/>
        <dbReference type="ChEBI" id="CHEBI:30616"/>
        <dbReference type="ChEBI" id="CHEBI:33019"/>
        <dbReference type="ChEBI" id="CHEBI:36165"/>
        <dbReference type="ChEBI" id="CHEBI:57287"/>
        <dbReference type="ChEBI" id="CHEBI:57360"/>
        <dbReference type="ChEBI" id="CHEBI:456215"/>
        <dbReference type="EC" id="6.2.1.14"/>
    </reaction>
</comment>
<comment type="cofactor">
    <cofactor evidence="1">
        <name>Mg(2+)</name>
        <dbReference type="ChEBI" id="CHEBI:18420"/>
    </cofactor>
</comment>
<comment type="pathway">
    <text evidence="1">Metabolic intermediate metabolism; pimeloyl-CoA biosynthesis; pimeloyl-CoA from pimelate: step 1/1.</text>
</comment>
<comment type="subunit">
    <text evidence="1">Homodimer.</text>
</comment>
<comment type="similarity">
    <text evidence="1">Belongs to the BioW family.</text>
</comment>
<accession>Q6G6P8</accession>
<gene>
    <name evidence="1" type="primary">bioW</name>
    <name type="ordered locus">SAS2314</name>
</gene>
<evidence type="ECO:0000255" key="1">
    <source>
        <dbReference type="HAMAP-Rule" id="MF_00668"/>
    </source>
</evidence>
<keyword id="KW-0067">ATP-binding</keyword>
<keyword id="KW-0093">Biotin biosynthesis</keyword>
<keyword id="KW-0436">Ligase</keyword>
<keyword id="KW-0460">Magnesium</keyword>
<keyword id="KW-0547">Nucleotide-binding</keyword>
<proteinExistence type="inferred from homology"/>
<feature type="chain" id="PRO_0000191021" description="6-carboxyhexanoate--CoA ligase">
    <location>
        <begin position="1"/>
        <end position="230"/>
    </location>
</feature>
<organism>
    <name type="scientific">Staphylococcus aureus (strain MSSA476)</name>
    <dbReference type="NCBI Taxonomy" id="282459"/>
    <lineage>
        <taxon>Bacteria</taxon>
        <taxon>Bacillati</taxon>
        <taxon>Bacillota</taxon>
        <taxon>Bacilli</taxon>
        <taxon>Bacillales</taxon>
        <taxon>Staphylococcaceae</taxon>
        <taxon>Staphylococcus</taxon>
    </lineage>
</organism>
<name>BIOW_STAAS</name>
<sequence length="230" mass="26216">MYSIKMRSSNQDVHISGAETICEFDKIEQTVQRFYNKGFFHENGQPDFLNIKIQKIMEPIQQIKALQIIEDDKANLQHLTQECGVTEQALNQGMTYIKNETVYTGAIILSAISGKRLDSFGQRGIRATHFSFEDINNKGDLNERVTDALAIASCINAHPYVKGELCVSDDLTYTTGYFASAKIGYHRLFDIKPVNTRYGGRIIFVDDRIDLNHYISFLESTPKQVVYERV</sequence>
<protein>
    <recommendedName>
        <fullName evidence="1">6-carboxyhexanoate--CoA ligase</fullName>
        <ecNumber evidence="1">6.2.1.14</ecNumber>
    </recommendedName>
    <alternativeName>
        <fullName evidence="1">Pimeloyl-CoA synthase</fullName>
    </alternativeName>
</protein>
<dbReference type="EC" id="6.2.1.14" evidence="1"/>
<dbReference type="EMBL" id="BX571857">
    <property type="protein sequence ID" value="CAG44127.1"/>
    <property type="molecule type" value="Genomic_DNA"/>
</dbReference>
<dbReference type="RefSeq" id="WP_000286878.1">
    <property type="nucleotide sequence ID" value="NC_002953.3"/>
</dbReference>
<dbReference type="SMR" id="Q6G6P8"/>
<dbReference type="KEGG" id="sas:SAS2314"/>
<dbReference type="HOGENOM" id="CLU_076858_0_0_9"/>
<dbReference type="UniPathway" id="UPA00999">
    <property type="reaction ID" value="UER00351"/>
</dbReference>
<dbReference type="GO" id="GO:0042410">
    <property type="term" value="F:6-carboxyhexanoate-CoA ligase activity"/>
    <property type="evidence" value="ECO:0007669"/>
    <property type="project" value="UniProtKB-UniRule"/>
</dbReference>
<dbReference type="GO" id="GO:0005524">
    <property type="term" value="F:ATP binding"/>
    <property type="evidence" value="ECO:0007669"/>
    <property type="project" value="UniProtKB-KW"/>
</dbReference>
<dbReference type="GO" id="GO:0000287">
    <property type="term" value="F:magnesium ion binding"/>
    <property type="evidence" value="ECO:0007669"/>
    <property type="project" value="UniProtKB-UniRule"/>
</dbReference>
<dbReference type="GO" id="GO:0009102">
    <property type="term" value="P:biotin biosynthetic process"/>
    <property type="evidence" value="ECO:0007669"/>
    <property type="project" value="UniProtKB-UniRule"/>
</dbReference>
<dbReference type="HAMAP" id="MF_00668">
    <property type="entry name" value="BioW"/>
    <property type="match status" value="1"/>
</dbReference>
<dbReference type="InterPro" id="IPR005499">
    <property type="entry name" value="BioW"/>
</dbReference>
<dbReference type="NCBIfam" id="NF002360">
    <property type="entry name" value="PRK01322.1"/>
    <property type="match status" value="1"/>
</dbReference>
<dbReference type="Pfam" id="PF03744">
    <property type="entry name" value="BioW"/>
    <property type="match status" value="1"/>
</dbReference>
<reference key="1">
    <citation type="journal article" date="2004" name="Proc. Natl. Acad. Sci. U.S.A.">
        <title>Complete genomes of two clinical Staphylococcus aureus strains: evidence for the rapid evolution of virulence and drug resistance.</title>
        <authorList>
            <person name="Holden M.T.G."/>
            <person name="Feil E.J."/>
            <person name="Lindsay J.A."/>
            <person name="Peacock S.J."/>
            <person name="Day N.P.J."/>
            <person name="Enright M.C."/>
            <person name="Foster T.J."/>
            <person name="Moore C.E."/>
            <person name="Hurst L."/>
            <person name="Atkin R."/>
            <person name="Barron A."/>
            <person name="Bason N."/>
            <person name="Bentley S.D."/>
            <person name="Chillingworth C."/>
            <person name="Chillingworth T."/>
            <person name="Churcher C."/>
            <person name="Clark L."/>
            <person name="Corton C."/>
            <person name="Cronin A."/>
            <person name="Doggett J."/>
            <person name="Dowd L."/>
            <person name="Feltwell T."/>
            <person name="Hance Z."/>
            <person name="Harris B."/>
            <person name="Hauser H."/>
            <person name="Holroyd S."/>
            <person name="Jagels K."/>
            <person name="James K.D."/>
            <person name="Lennard N."/>
            <person name="Line A."/>
            <person name="Mayes R."/>
            <person name="Moule S."/>
            <person name="Mungall K."/>
            <person name="Ormond D."/>
            <person name="Quail M.A."/>
            <person name="Rabbinowitsch E."/>
            <person name="Rutherford K.M."/>
            <person name="Sanders M."/>
            <person name="Sharp S."/>
            <person name="Simmonds M."/>
            <person name="Stevens K."/>
            <person name="Whitehead S."/>
            <person name="Barrell B.G."/>
            <person name="Spratt B.G."/>
            <person name="Parkhill J."/>
        </authorList>
    </citation>
    <scope>NUCLEOTIDE SEQUENCE [LARGE SCALE GENOMIC DNA]</scope>
    <source>
        <strain>MSSA476</strain>
    </source>
</reference>